<name>GATA_GLOC7</name>
<comment type="function">
    <text evidence="1">Allows the formation of correctly charged Gln-tRNA(Gln) through the transamidation of misacylated Glu-tRNA(Gln) in organisms which lack glutaminyl-tRNA synthetase. The reaction takes place in the presence of glutamine and ATP through an activated gamma-phospho-Glu-tRNA(Gln).</text>
</comment>
<comment type="catalytic activity">
    <reaction evidence="1">
        <text>L-glutamyl-tRNA(Gln) + L-glutamine + ATP + H2O = L-glutaminyl-tRNA(Gln) + L-glutamate + ADP + phosphate + H(+)</text>
        <dbReference type="Rhea" id="RHEA:17521"/>
        <dbReference type="Rhea" id="RHEA-COMP:9681"/>
        <dbReference type="Rhea" id="RHEA-COMP:9684"/>
        <dbReference type="ChEBI" id="CHEBI:15377"/>
        <dbReference type="ChEBI" id="CHEBI:15378"/>
        <dbReference type="ChEBI" id="CHEBI:29985"/>
        <dbReference type="ChEBI" id="CHEBI:30616"/>
        <dbReference type="ChEBI" id="CHEBI:43474"/>
        <dbReference type="ChEBI" id="CHEBI:58359"/>
        <dbReference type="ChEBI" id="CHEBI:78520"/>
        <dbReference type="ChEBI" id="CHEBI:78521"/>
        <dbReference type="ChEBI" id="CHEBI:456216"/>
        <dbReference type="EC" id="6.3.5.7"/>
    </reaction>
</comment>
<comment type="subunit">
    <text evidence="1">Heterotrimer of A, B and C subunits.</text>
</comment>
<comment type="similarity">
    <text evidence="1">Belongs to the amidase family. GatA subfamily.</text>
</comment>
<keyword id="KW-0067">ATP-binding</keyword>
<keyword id="KW-0436">Ligase</keyword>
<keyword id="KW-0547">Nucleotide-binding</keyword>
<keyword id="KW-0648">Protein biosynthesis</keyword>
<keyword id="KW-1185">Reference proteome</keyword>
<feature type="chain" id="PRO_1000117607" description="Glutamyl-tRNA(Gln) amidotransferase subunit A">
    <location>
        <begin position="1"/>
        <end position="483"/>
    </location>
</feature>
<feature type="active site" description="Charge relay system" evidence="1">
    <location>
        <position position="75"/>
    </location>
</feature>
<feature type="active site" description="Charge relay system" evidence="1">
    <location>
        <position position="150"/>
    </location>
</feature>
<feature type="active site" description="Acyl-ester intermediate" evidence="1">
    <location>
        <position position="174"/>
    </location>
</feature>
<reference key="1">
    <citation type="journal article" date="2011" name="MBio">
        <title>Novel metabolic attributes of the genus Cyanothece, comprising a group of unicellular nitrogen-fixing Cyanobacteria.</title>
        <authorList>
            <person name="Bandyopadhyay A."/>
            <person name="Elvitigala T."/>
            <person name="Welsh E."/>
            <person name="Stockel J."/>
            <person name="Liberton M."/>
            <person name="Min H."/>
            <person name="Sherman L.A."/>
            <person name="Pakrasi H.B."/>
        </authorList>
    </citation>
    <scope>NUCLEOTIDE SEQUENCE [LARGE SCALE GENOMIC DNA]</scope>
    <source>
        <strain>PCC 7424</strain>
    </source>
</reference>
<sequence length="483" mass="52227">MASIRELHQQLIKKERSAVEITTEALDRIEKLEPLLHSFLHITADQALESAKKVDAKIAAKEEIGLLEGIPVGIKDNMCTQGIPTTCGSKILENFVPPYESTVTQKLKDSGAITLGKTNLDEFAMGSSTESSGYQVTANPWDLSRVPGGSSGGSAAAVASEECVVALGSDTGGSIRQPASYCGVVGLKPTYGLVSRFGLVAYASSLDQIGPFARTVEDAAILLGAIAGYDPKDSTSLNVEIPDYTQFLKPKLSKLKIGIIKETFGEGLDPVVADTVNQGVEQLKKLGAKVKEISCPRFRYGLPAYYIIAPSEASANLARYDAVKYGIRKEADTLMSMYTTTRASGFGAEVKRRIMLGTYALSAGYYDAYYLKAQKVRTLIKQDFEQAFEEVDVLVCPTAPTTAFKAGEKTDDPLSMYLSDLMTIPVNLGGLPGMSIPCGFDRLGLPIGMQLISNVLREDLLFQVAYAYEQATDWHKRKPPLPQ</sequence>
<dbReference type="EC" id="6.3.5.7" evidence="1"/>
<dbReference type="EMBL" id="CP001291">
    <property type="protein sequence ID" value="ACK72587.1"/>
    <property type="molecule type" value="Genomic_DNA"/>
</dbReference>
<dbReference type="RefSeq" id="WP_015956172.1">
    <property type="nucleotide sequence ID" value="NC_011729.1"/>
</dbReference>
<dbReference type="SMR" id="B7KLL5"/>
<dbReference type="STRING" id="65393.PCC7424_4217"/>
<dbReference type="KEGG" id="cyc:PCC7424_4217"/>
<dbReference type="eggNOG" id="COG0154">
    <property type="taxonomic scope" value="Bacteria"/>
</dbReference>
<dbReference type="HOGENOM" id="CLU_009600_0_3_3"/>
<dbReference type="OrthoDB" id="9811471at2"/>
<dbReference type="Proteomes" id="UP000002384">
    <property type="component" value="Chromosome"/>
</dbReference>
<dbReference type="GO" id="GO:0030956">
    <property type="term" value="C:glutamyl-tRNA(Gln) amidotransferase complex"/>
    <property type="evidence" value="ECO:0007669"/>
    <property type="project" value="InterPro"/>
</dbReference>
<dbReference type="GO" id="GO:0005524">
    <property type="term" value="F:ATP binding"/>
    <property type="evidence" value="ECO:0007669"/>
    <property type="project" value="UniProtKB-KW"/>
</dbReference>
<dbReference type="GO" id="GO:0050567">
    <property type="term" value="F:glutaminyl-tRNA synthase (glutamine-hydrolyzing) activity"/>
    <property type="evidence" value="ECO:0007669"/>
    <property type="project" value="UniProtKB-UniRule"/>
</dbReference>
<dbReference type="GO" id="GO:0006412">
    <property type="term" value="P:translation"/>
    <property type="evidence" value="ECO:0007669"/>
    <property type="project" value="UniProtKB-UniRule"/>
</dbReference>
<dbReference type="Gene3D" id="3.90.1300.10">
    <property type="entry name" value="Amidase signature (AS) domain"/>
    <property type="match status" value="1"/>
</dbReference>
<dbReference type="HAMAP" id="MF_00120">
    <property type="entry name" value="GatA"/>
    <property type="match status" value="1"/>
</dbReference>
<dbReference type="InterPro" id="IPR000120">
    <property type="entry name" value="Amidase"/>
</dbReference>
<dbReference type="InterPro" id="IPR020556">
    <property type="entry name" value="Amidase_CS"/>
</dbReference>
<dbReference type="InterPro" id="IPR023631">
    <property type="entry name" value="Amidase_dom"/>
</dbReference>
<dbReference type="InterPro" id="IPR036928">
    <property type="entry name" value="AS_sf"/>
</dbReference>
<dbReference type="InterPro" id="IPR004412">
    <property type="entry name" value="GatA"/>
</dbReference>
<dbReference type="NCBIfam" id="TIGR00132">
    <property type="entry name" value="gatA"/>
    <property type="match status" value="1"/>
</dbReference>
<dbReference type="PANTHER" id="PTHR11895:SF151">
    <property type="entry name" value="GLUTAMYL-TRNA(GLN) AMIDOTRANSFERASE SUBUNIT A"/>
    <property type="match status" value="1"/>
</dbReference>
<dbReference type="PANTHER" id="PTHR11895">
    <property type="entry name" value="TRANSAMIDASE"/>
    <property type="match status" value="1"/>
</dbReference>
<dbReference type="Pfam" id="PF01425">
    <property type="entry name" value="Amidase"/>
    <property type="match status" value="1"/>
</dbReference>
<dbReference type="SUPFAM" id="SSF75304">
    <property type="entry name" value="Amidase signature (AS) enzymes"/>
    <property type="match status" value="1"/>
</dbReference>
<dbReference type="PROSITE" id="PS00571">
    <property type="entry name" value="AMIDASES"/>
    <property type="match status" value="1"/>
</dbReference>
<proteinExistence type="inferred from homology"/>
<evidence type="ECO:0000255" key="1">
    <source>
        <dbReference type="HAMAP-Rule" id="MF_00120"/>
    </source>
</evidence>
<organism>
    <name type="scientific">Gloeothece citriformis (strain PCC 7424)</name>
    <name type="common">Cyanothece sp. (strain PCC 7424)</name>
    <dbReference type="NCBI Taxonomy" id="65393"/>
    <lineage>
        <taxon>Bacteria</taxon>
        <taxon>Bacillati</taxon>
        <taxon>Cyanobacteriota</taxon>
        <taxon>Cyanophyceae</taxon>
        <taxon>Oscillatoriophycideae</taxon>
        <taxon>Chroococcales</taxon>
        <taxon>Aphanothecaceae</taxon>
        <taxon>Gloeothece</taxon>
        <taxon>Gloeothece citriformis</taxon>
    </lineage>
</organism>
<accession>B7KLL5</accession>
<protein>
    <recommendedName>
        <fullName evidence="1">Glutamyl-tRNA(Gln) amidotransferase subunit A</fullName>
        <shortName evidence="1">Glu-ADT subunit A</shortName>
        <ecNumber evidence="1">6.3.5.7</ecNumber>
    </recommendedName>
</protein>
<gene>
    <name evidence="1" type="primary">gatA</name>
    <name type="ordered locus">PCC7424_4217</name>
</gene>